<keyword id="KW-0274">FAD</keyword>
<keyword id="KW-0285">Flavoprotein</keyword>
<keyword id="KW-0521">NADP</keyword>
<keyword id="KW-0560">Oxidoreductase</keyword>
<comment type="catalytic activity">
    <reaction evidence="1">
        <text>2 reduced [2Fe-2S]-[ferredoxin] + NADP(+) + H(+) = 2 oxidized [2Fe-2S]-[ferredoxin] + NADPH</text>
        <dbReference type="Rhea" id="RHEA:20125"/>
        <dbReference type="Rhea" id="RHEA-COMP:10000"/>
        <dbReference type="Rhea" id="RHEA-COMP:10001"/>
        <dbReference type="ChEBI" id="CHEBI:15378"/>
        <dbReference type="ChEBI" id="CHEBI:33737"/>
        <dbReference type="ChEBI" id="CHEBI:33738"/>
        <dbReference type="ChEBI" id="CHEBI:57783"/>
        <dbReference type="ChEBI" id="CHEBI:58349"/>
        <dbReference type="EC" id="1.18.1.2"/>
    </reaction>
</comment>
<comment type="cofactor">
    <cofactor evidence="1">
        <name>FAD</name>
        <dbReference type="ChEBI" id="CHEBI:57692"/>
    </cofactor>
    <text evidence="1">Binds 1 FAD per subunit.</text>
</comment>
<comment type="subunit">
    <text evidence="1">Homodimer.</text>
</comment>
<comment type="similarity">
    <text evidence="1">Belongs to the ferredoxin--NADP reductase type 2 family.</text>
</comment>
<comment type="sequence caution" evidence="2">
    <conflict type="erroneous initiation">
        <sequence resource="EMBL-CDS" id="AAV86613"/>
    </conflict>
</comment>
<organism>
    <name type="scientific">Anaplasma marginale (strain St. Maries)</name>
    <dbReference type="NCBI Taxonomy" id="234826"/>
    <lineage>
        <taxon>Bacteria</taxon>
        <taxon>Pseudomonadati</taxon>
        <taxon>Pseudomonadota</taxon>
        <taxon>Alphaproteobacteria</taxon>
        <taxon>Rickettsiales</taxon>
        <taxon>Anaplasmataceae</taxon>
        <taxon>Anaplasma</taxon>
    </lineage>
</organism>
<sequence>MAIIGAGPVGLFTVFQAGMLGMSACVIDALSEVGGQCAVLYPEKPIYDIPAYPVTLARDLVNNLKRQADPFKPTYLLGHTAEQVLEEGEHFVVVTDKKVGVRCRAIVIAAGSGGFGPNRPPLDGITEYEDKSVFYHVSDVSRFRGKRVVIAGGGDSAADWAVSLSEVADSVHVIHRRHSFRCAPNTLRNLESLAERGQIKLLVPYQLAGLAGSDGMLNGVIIRNISSKEETRIDADFLLPFFGISAKLGPIANWGLGVESFYIPIDQSTCRTARTRIYAVGDVAHYQGKLKLILVGFSESALACHDIYKVLFPETPLNFQYSTSKKMPC</sequence>
<name>FENR_ANAMM</name>
<evidence type="ECO:0000255" key="1">
    <source>
        <dbReference type="HAMAP-Rule" id="MF_01685"/>
    </source>
</evidence>
<evidence type="ECO:0000305" key="2"/>
<reference key="1">
    <citation type="journal article" date="2005" name="Proc. Natl. Acad. Sci. U.S.A.">
        <title>Complete genome sequencing of Anaplasma marginale reveals that the surface is skewed to two superfamilies of outer membrane proteins.</title>
        <authorList>
            <person name="Brayton K.A."/>
            <person name="Kappmeyer L.S."/>
            <person name="Herndon D.R."/>
            <person name="Dark M.J."/>
            <person name="Tibbals D.L."/>
            <person name="Palmer G.H."/>
            <person name="McGuire T.C."/>
            <person name="Knowles D.P. Jr."/>
        </authorList>
    </citation>
    <scope>NUCLEOTIDE SEQUENCE [LARGE SCALE GENOMIC DNA]</scope>
    <source>
        <strain>St. Maries</strain>
    </source>
</reference>
<proteinExistence type="inferred from homology"/>
<dbReference type="EC" id="1.18.1.2" evidence="1"/>
<dbReference type="EMBL" id="CP000030">
    <property type="protein sequence ID" value="AAV86613.1"/>
    <property type="status" value="ALT_INIT"/>
    <property type="molecule type" value="Genomic_DNA"/>
</dbReference>
<dbReference type="RefSeq" id="WP_011114362.1">
    <property type="nucleotide sequence ID" value="NZ_AFMU01000036.1"/>
</dbReference>
<dbReference type="SMR" id="Q5PAR7"/>
<dbReference type="KEGG" id="ama:AM617"/>
<dbReference type="HOGENOM" id="CLU_031864_5_5_5"/>
<dbReference type="GO" id="GO:0004324">
    <property type="term" value="F:ferredoxin-NADP+ reductase activity"/>
    <property type="evidence" value="ECO:0007669"/>
    <property type="project" value="UniProtKB-UniRule"/>
</dbReference>
<dbReference type="GO" id="GO:0050660">
    <property type="term" value="F:flavin adenine dinucleotide binding"/>
    <property type="evidence" value="ECO:0007669"/>
    <property type="project" value="UniProtKB-UniRule"/>
</dbReference>
<dbReference type="GO" id="GO:0050661">
    <property type="term" value="F:NADP binding"/>
    <property type="evidence" value="ECO:0007669"/>
    <property type="project" value="UniProtKB-UniRule"/>
</dbReference>
<dbReference type="Gene3D" id="3.50.50.60">
    <property type="entry name" value="FAD/NAD(P)-binding domain"/>
    <property type="match status" value="2"/>
</dbReference>
<dbReference type="HAMAP" id="MF_01685">
    <property type="entry name" value="FENR2"/>
    <property type="match status" value="1"/>
</dbReference>
<dbReference type="InterPro" id="IPR036188">
    <property type="entry name" value="FAD/NAD-bd_sf"/>
</dbReference>
<dbReference type="InterPro" id="IPR023753">
    <property type="entry name" value="FAD/NAD-binding_dom"/>
</dbReference>
<dbReference type="InterPro" id="IPR022890">
    <property type="entry name" value="Fd--NADP_Rdtase_type_2"/>
</dbReference>
<dbReference type="InterPro" id="IPR050097">
    <property type="entry name" value="Ferredoxin-NADP_redctase_2"/>
</dbReference>
<dbReference type="PANTHER" id="PTHR48105">
    <property type="entry name" value="THIOREDOXIN REDUCTASE 1-RELATED-RELATED"/>
    <property type="match status" value="1"/>
</dbReference>
<dbReference type="Pfam" id="PF07992">
    <property type="entry name" value="Pyr_redox_2"/>
    <property type="match status" value="1"/>
</dbReference>
<dbReference type="PRINTS" id="PR00368">
    <property type="entry name" value="FADPNR"/>
</dbReference>
<dbReference type="PRINTS" id="PR00469">
    <property type="entry name" value="PNDRDTASEII"/>
</dbReference>
<dbReference type="SUPFAM" id="SSF51905">
    <property type="entry name" value="FAD/NAD(P)-binding domain"/>
    <property type="match status" value="1"/>
</dbReference>
<gene>
    <name type="ordered locus">AM617</name>
</gene>
<accession>Q5PAR7</accession>
<protein>
    <recommendedName>
        <fullName evidence="1">Ferredoxin--NADP reductase</fullName>
        <shortName evidence="1">FNR</shortName>
        <shortName evidence="1">Fd-NADP(+) reductase</shortName>
        <ecNumber evidence="1">1.18.1.2</ecNumber>
    </recommendedName>
</protein>
<feature type="chain" id="PRO_0000364782" description="Ferredoxin--NADP reductase">
    <location>
        <begin position="1"/>
        <end position="329"/>
    </location>
</feature>
<feature type="binding site" evidence="1">
    <location>
        <position position="28"/>
    </location>
    <ligand>
        <name>FAD</name>
        <dbReference type="ChEBI" id="CHEBI:57692"/>
    </ligand>
</feature>
<feature type="binding site" evidence="1">
    <location>
        <position position="36"/>
    </location>
    <ligand>
        <name>FAD</name>
        <dbReference type="ChEBI" id="CHEBI:57692"/>
    </ligand>
</feature>
<feature type="binding site" evidence="1">
    <location>
        <position position="41"/>
    </location>
    <ligand>
        <name>FAD</name>
        <dbReference type="ChEBI" id="CHEBI:57692"/>
    </ligand>
</feature>
<feature type="binding site" evidence="1">
    <location>
        <position position="81"/>
    </location>
    <ligand>
        <name>FAD</name>
        <dbReference type="ChEBI" id="CHEBI:57692"/>
    </ligand>
</feature>
<feature type="binding site" evidence="1">
    <location>
        <position position="115"/>
    </location>
    <ligand>
        <name>FAD</name>
        <dbReference type="ChEBI" id="CHEBI:57692"/>
    </ligand>
</feature>
<feature type="binding site" evidence="1">
    <location>
        <position position="282"/>
    </location>
    <ligand>
        <name>FAD</name>
        <dbReference type="ChEBI" id="CHEBI:57692"/>
    </ligand>
</feature>
<feature type="binding site" evidence="1">
    <location>
        <position position="323"/>
    </location>
    <ligand>
        <name>FAD</name>
        <dbReference type="ChEBI" id="CHEBI:57692"/>
    </ligand>
</feature>